<accession>P0DG40</accession>
<accession>Q8K5I9</accession>
<keyword id="KW-0030">Aminoacyl-tRNA synthetase</keyword>
<keyword id="KW-0067">ATP-binding</keyword>
<keyword id="KW-0963">Cytoplasm</keyword>
<keyword id="KW-0436">Ligase</keyword>
<keyword id="KW-0547">Nucleotide-binding</keyword>
<keyword id="KW-0648">Protein biosynthesis</keyword>
<reference key="1">
    <citation type="journal article" date="2002" name="Proc. Natl. Acad. Sci. U.S.A.">
        <title>Genome sequence of a serotype M3 strain of group A Streptococcus: phage-encoded toxins, the high-virulence phenotype, and clone emergence.</title>
        <authorList>
            <person name="Beres S.B."/>
            <person name="Sylva G.L."/>
            <person name="Barbian K.D."/>
            <person name="Lei B."/>
            <person name="Hoff J.S."/>
            <person name="Mammarella N.D."/>
            <person name="Liu M.-Y."/>
            <person name="Smoot J.C."/>
            <person name="Porcella S.F."/>
            <person name="Parkins L.D."/>
            <person name="Campbell D.S."/>
            <person name="Smith T.M."/>
            <person name="McCormick J.K."/>
            <person name="Leung D.Y.M."/>
            <person name="Schlievert P.M."/>
            <person name="Musser J.M."/>
        </authorList>
    </citation>
    <scope>NUCLEOTIDE SEQUENCE [LARGE SCALE GENOMIC DNA]</scope>
    <source>
        <strain>ATCC BAA-595 / MGAS315</strain>
    </source>
</reference>
<feature type="initiator methionine" description="Removed" evidence="1">
    <location>
        <position position="1"/>
    </location>
</feature>
<feature type="chain" id="PRO_0000136269" description="Histidine--tRNA ligase">
    <location>
        <begin position="2"/>
        <end position="426"/>
    </location>
</feature>
<proteinExistence type="inferred from homology"/>
<organism>
    <name type="scientific">Streptococcus pyogenes serotype M3 (strain ATCC BAA-595 / MGAS315)</name>
    <dbReference type="NCBI Taxonomy" id="198466"/>
    <lineage>
        <taxon>Bacteria</taxon>
        <taxon>Bacillati</taxon>
        <taxon>Bacillota</taxon>
        <taxon>Bacilli</taxon>
        <taxon>Lactobacillales</taxon>
        <taxon>Streptococcaceae</taxon>
        <taxon>Streptococcus</taxon>
    </lineage>
</organism>
<evidence type="ECO:0000250" key="1"/>
<evidence type="ECO:0000255" key="2">
    <source>
        <dbReference type="HAMAP-Rule" id="MF_00127"/>
    </source>
</evidence>
<gene>
    <name evidence="2" type="primary">hisS</name>
    <name type="ordered locus">SpyM3_1815</name>
</gene>
<comment type="catalytic activity">
    <reaction evidence="2">
        <text>tRNA(His) + L-histidine + ATP = L-histidyl-tRNA(His) + AMP + diphosphate + H(+)</text>
        <dbReference type="Rhea" id="RHEA:17313"/>
        <dbReference type="Rhea" id="RHEA-COMP:9665"/>
        <dbReference type="Rhea" id="RHEA-COMP:9689"/>
        <dbReference type="ChEBI" id="CHEBI:15378"/>
        <dbReference type="ChEBI" id="CHEBI:30616"/>
        <dbReference type="ChEBI" id="CHEBI:33019"/>
        <dbReference type="ChEBI" id="CHEBI:57595"/>
        <dbReference type="ChEBI" id="CHEBI:78442"/>
        <dbReference type="ChEBI" id="CHEBI:78527"/>
        <dbReference type="ChEBI" id="CHEBI:456215"/>
        <dbReference type="EC" id="6.1.1.21"/>
    </reaction>
</comment>
<comment type="subunit">
    <text evidence="2">Homodimer.</text>
</comment>
<comment type="subcellular location">
    <subcellularLocation>
        <location evidence="2">Cytoplasm</location>
    </subcellularLocation>
</comment>
<comment type="similarity">
    <text evidence="2">Belongs to the class-II aminoacyl-tRNA synthetase family.</text>
</comment>
<name>SYH_STRP3</name>
<dbReference type="EC" id="6.1.1.21" evidence="2"/>
<dbReference type="EMBL" id="AE014074">
    <property type="protein sequence ID" value="AAM80422.1"/>
    <property type="molecule type" value="Genomic_DNA"/>
</dbReference>
<dbReference type="RefSeq" id="WP_011055096.1">
    <property type="nucleotide sequence ID" value="NC_004070.1"/>
</dbReference>
<dbReference type="SMR" id="P0DG40"/>
<dbReference type="KEGG" id="spg:SpyM3_1815"/>
<dbReference type="HOGENOM" id="CLU_025113_1_1_9"/>
<dbReference type="Proteomes" id="UP000000564">
    <property type="component" value="Chromosome"/>
</dbReference>
<dbReference type="GO" id="GO:0005737">
    <property type="term" value="C:cytoplasm"/>
    <property type="evidence" value="ECO:0007669"/>
    <property type="project" value="UniProtKB-SubCell"/>
</dbReference>
<dbReference type="GO" id="GO:0005524">
    <property type="term" value="F:ATP binding"/>
    <property type="evidence" value="ECO:0007669"/>
    <property type="project" value="UniProtKB-UniRule"/>
</dbReference>
<dbReference type="GO" id="GO:0140096">
    <property type="term" value="F:catalytic activity, acting on a protein"/>
    <property type="evidence" value="ECO:0007669"/>
    <property type="project" value="UniProtKB-ARBA"/>
</dbReference>
<dbReference type="GO" id="GO:0004821">
    <property type="term" value="F:histidine-tRNA ligase activity"/>
    <property type="evidence" value="ECO:0007669"/>
    <property type="project" value="UniProtKB-UniRule"/>
</dbReference>
<dbReference type="GO" id="GO:0016740">
    <property type="term" value="F:transferase activity"/>
    <property type="evidence" value="ECO:0007669"/>
    <property type="project" value="UniProtKB-ARBA"/>
</dbReference>
<dbReference type="GO" id="GO:0006427">
    <property type="term" value="P:histidyl-tRNA aminoacylation"/>
    <property type="evidence" value="ECO:0007669"/>
    <property type="project" value="UniProtKB-UniRule"/>
</dbReference>
<dbReference type="CDD" id="cd00773">
    <property type="entry name" value="HisRS-like_core"/>
    <property type="match status" value="1"/>
</dbReference>
<dbReference type="CDD" id="cd00859">
    <property type="entry name" value="HisRS_anticodon"/>
    <property type="match status" value="1"/>
</dbReference>
<dbReference type="FunFam" id="3.30.930.10:FF:000005">
    <property type="entry name" value="Histidine--tRNA ligase"/>
    <property type="match status" value="1"/>
</dbReference>
<dbReference type="Gene3D" id="3.40.50.800">
    <property type="entry name" value="Anticodon-binding domain"/>
    <property type="match status" value="1"/>
</dbReference>
<dbReference type="Gene3D" id="3.30.930.10">
    <property type="entry name" value="Bira Bifunctional Protein, Domain 2"/>
    <property type="match status" value="1"/>
</dbReference>
<dbReference type="HAMAP" id="MF_00127">
    <property type="entry name" value="His_tRNA_synth"/>
    <property type="match status" value="1"/>
</dbReference>
<dbReference type="InterPro" id="IPR006195">
    <property type="entry name" value="aa-tRNA-synth_II"/>
</dbReference>
<dbReference type="InterPro" id="IPR045864">
    <property type="entry name" value="aa-tRNA-synth_II/BPL/LPL"/>
</dbReference>
<dbReference type="InterPro" id="IPR004154">
    <property type="entry name" value="Anticodon-bd"/>
</dbReference>
<dbReference type="InterPro" id="IPR036621">
    <property type="entry name" value="Anticodon-bd_dom_sf"/>
</dbReference>
<dbReference type="InterPro" id="IPR015807">
    <property type="entry name" value="His-tRNA-ligase"/>
</dbReference>
<dbReference type="InterPro" id="IPR041715">
    <property type="entry name" value="HisRS-like_core"/>
</dbReference>
<dbReference type="InterPro" id="IPR004516">
    <property type="entry name" value="HisRS/HisZ"/>
</dbReference>
<dbReference type="InterPro" id="IPR033656">
    <property type="entry name" value="HisRS_anticodon"/>
</dbReference>
<dbReference type="NCBIfam" id="TIGR00442">
    <property type="entry name" value="hisS"/>
    <property type="match status" value="1"/>
</dbReference>
<dbReference type="PANTHER" id="PTHR43707:SF1">
    <property type="entry name" value="HISTIDINE--TRNA LIGASE, MITOCHONDRIAL-RELATED"/>
    <property type="match status" value="1"/>
</dbReference>
<dbReference type="PANTHER" id="PTHR43707">
    <property type="entry name" value="HISTIDYL-TRNA SYNTHETASE"/>
    <property type="match status" value="1"/>
</dbReference>
<dbReference type="Pfam" id="PF03129">
    <property type="entry name" value="HGTP_anticodon"/>
    <property type="match status" value="1"/>
</dbReference>
<dbReference type="Pfam" id="PF13393">
    <property type="entry name" value="tRNA-synt_His"/>
    <property type="match status" value="1"/>
</dbReference>
<dbReference type="PIRSF" id="PIRSF001549">
    <property type="entry name" value="His-tRNA_synth"/>
    <property type="match status" value="1"/>
</dbReference>
<dbReference type="SUPFAM" id="SSF52954">
    <property type="entry name" value="Class II aaRS ABD-related"/>
    <property type="match status" value="1"/>
</dbReference>
<dbReference type="SUPFAM" id="SSF55681">
    <property type="entry name" value="Class II aaRS and biotin synthetases"/>
    <property type="match status" value="1"/>
</dbReference>
<dbReference type="PROSITE" id="PS50862">
    <property type="entry name" value="AA_TRNA_LIGASE_II"/>
    <property type="match status" value="1"/>
</dbReference>
<protein>
    <recommendedName>
        <fullName evidence="2">Histidine--tRNA ligase</fullName>
        <ecNumber evidence="2">6.1.1.21</ecNumber>
    </recommendedName>
    <alternativeName>
        <fullName evidence="2">Histidyl-tRNA synthetase</fullName>
        <shortName evidence="2">HisRS</shortName>
    </alternativeName>
</protein>
<sequence>MKLQKPKGTQDILPGDAAKWQYVESVARDTFSQYNYGEIRTPMFEHYEVISRSVGDTTDIVTKEMYDFYDKGDRHITLRPEGTAPVVRSYVENKLFAPEVQKPVKLYYIGSMFRYERPQAGRLREFHQIGVECFGAANPATDVETIAMAYHLFEKLGIKDVTLHLNSLGSPESRSAYRQALIDYLTPMRDQLSKDSQRRLDENPLRVLDSKEKEDKLAVEKAPSILDYLDEESQAHFEAVKAMLEALDIPYVIDTNMVRGLDYYNHTIFEFITSVEGSDLTICAGGRYDSLVGYFGGPETPGFGFGLGLERLLMVIEKQGITLPIETEMDVYLAVLGDGANSKALELVQAIRRQGFTAERDYLGRKIKAQFKSADTFKAKLVMTLGESEVEAGKAVIKNNRSRQEVEVSFEDMMTNFANISEQLLS</sequence>